<comment type="function">
    <text evidence="1">DNA ligase that catalyzes the formation of phosphodiester linkages between 5'-phosphoryl and 3'-hydroxyl groups in double-stranded DNA using NAD as a coenzyme and as the energy source for the reaction. It is essential for DNA replication and repair of damaged DNA.</text>
</comment>
<comment type="catalytic activity">
    <reaction evidence="1">
        <text>NAD(+) + (deoxyribonucleotide)n-3'-hydroxyl + 5'-phospho-(deoxyribonucleotide)m = (deoxyribonucleotide)n+m + AMP + beta-nicotinamide D-nucleotide.</text>
        <dbReference type="EC" id="6.5.1.2"/>
    </reaction>
</comment>
<comment type="cofactor">
    <cofactor evidence="1">
        <name>Mg(2+)</name>
        <dbReference type="ChEBI" id="CHEBI:18420"/>
    </cofactor>
    <cofactor evidence="1">
        <name>Mn(2+)</name>
        <dbReference type="ChEBI" id="CHEBI:29035"/>
    </cofactor>
</comment>
<comment type="similarity">
    <text evidence="1">Belongs to the NAD-dependent DNA ligase family. LigA subfamily.</text>
</comment>
<accession>A4QDK5</accession>
<keyword id="KW-0227">DNA damage</keyword>
<keyword id="KW-0234">DNA repair</keyword>
<keyword id="KW-0235">DNA replication</keyword>
<keyword id="KW-0436">Ligase</keyword>
<keyword id="KW-0460">Magnesium</keyword>
<keyword id="KW-0464">Manganese</keyword>
<keyword id="KW-0479">Metal-binding</keyword>
<keyword id="KW-0520">NAD</keyword>
<keyword id="KW-0862">Zinc</keyword>
<name>DNLJ_CORGB</name>
<feature type="chain" id="PRO_0000313207" description="DNA ligase">
    <location>
        <begin position="1"/>
        <end position="680"/>
    </location>
</feature>
<feature type="domain" description="BRCT" evidence="1">
    <location>
        <begin position="597"/>
        <end position="680"/>
    </location>
</feature>
<feature type="active site" description="N6-AMP-lysine intermediate" evidence="1">
    <location>
        <position position="113"/>
    </location>
</feature>
<feature type="binding site" evidence="1">
    <location>
        <begin position="35"/>
        <end position="39"/>
    </location>
    <ligand>
        <name>NAD(+)</name>
        <dbReference type="ChEBI" id="CHEBI:57540"/>
    </ligand>
</feature>
<feature type="binding site" evidence="1">
    <location>
        <begin position="86"/>
        <end position="87"/>
    </location>
    <ligand>
        <name>NAD(+)</name>
        <dbReference type="ChEBI" id="CHEBI:57540"/>
    </ligand>
</feature>
<feature type="binding site" evidence="1">
    <location>
        <position position="111"/>
    </location>
    <ligand>
        <name>NAD(+)</name>
        <dbReference type="ChEBI" id="CHEBI:57540"/>
    </ligand>
</feature>
<feature type="binding site" evidence="1">
    <location>
        <position position="134"/>
    </location>
    <ligand>
        <name>NAD(+)</name>
        <dbReference type="ChEBI" id="CHEBI:57540"/>
    </ligand>
</feature>
<feature type="binding site" evidence="1">
    <location>
        <position position="174"/>
    </location>
    <ligand>
        <name>NAD(+)</name>
        <dbReference type="ChEBI" id="CHEBI:57540"/>
    </ligand>
</feature>
<feature type="binding site" evidence="1">
    <location>
        <position position="290"/>
    </location>
    <ligand>
        <name>NAD(+)</name>
        <dbReference type="ChEBI" id="CHEBI:57540"/>
    </ligand>
</feature>
<feature type="binding site" evidence="1">
    <location>
        <position position="314"/>
    </location>
    <ligand>
        <name>NAD(+)</name>
        <dbReference type="ChEBI" id="CHEBI:57540"/>
    </ligand>
</feature>
<feature type="binding site" evidence="1">
    <location>
        <position position="408"/>
    </location>
    <ligand>
        <name>Zn(2+)</name>
        <dbReference type="ChEBI" id="CHEBI:29105"/>
    </ligand>
</feature>
<feature type="binding site" evidence="1">
    <location>
        <position position="411"/>
    </location>
    <ligand>
        <name>Zn(2+)</name>
        <dbReference type="ChEBI" id="CHEBI:29105"/>
    </ligand>
</feature>
<feature type="binding site" evidence="1">
    <location>
        <position position="427"/>
    </location>
    <ligand>
        <name>Zn(2+)</name>
        <dbReference type="ChEBI" id="CHEBI:29105"/>
    </ligand>
</feature>
<feature type="binding site" evidence="1">
    <location>
        <position position="433"/>
    </location>
    <ligand>
        <name>Zn(2+)</name>
        <dbReference type="ChEBI" id="CHEBI:29105"/>
    </ligand>
</feature>
<protein>
    <recommendedName>
        <fullName evidence="1">DNA ligase</fullName>
        <ecNumber evidence="1">6.5.1.2</ecNumber>
    </recommendedName>
    <alternativeName>
        <fullName evidence="1">Polydeoxyribonucleotide synthase [NAD(+)]</fullName>
    </alternativeName>
</protein>
<dbReference type="EC" id="6.5.1.2" evidence="1"/>
<dbReference type="EMBL" id="AP009044">
    <property type="protein sequence ID" value="BAF54302.1"/>
    <property type="molecule type" value="Genomic_DNA"/>
</dbReference>
<dbReference type="RefSeq" id="WP_003854765.1">
    <property type="nucleotide sequence ID" value="NC_009342.1"/>
</dbReference>
<dbReference type="SMR" id="A4QDK5"/>
<dbReference type="KEGG" id="cgt:cgR_1321"/>
<dbReference type="HOGENOM" id="CLU_007764_2_1_11"/>
<dbReference type="PhylomeDB" id="A4QDK5"/>
<dbReference type="Proteomes" id="UP000006698">
    <property type="component" value="Chromosome"/>
</dbReference>
<dbReference type="GO" id="GO:0005829">
    <property type="term" value="C:cytosol"/>
    <property type="evidence" value="ECO:0007669"/>
    <property type="project" value="TreeGrafter"/>
</dbReference>
<dbReference type="GO" id="GO:0003911">
    <property type="term" value="F:DNA ligase (NAD+) activity"/>
    <property type="evidence" value="ECO:0007669"/>
    <property type="project" value="UniProtKB-UniRule"/>
</dbReference>
<dbReference type="GO" id="GO:0046872">
    <property type="term" value="F:metal ion binding"/>
    <property type="evidence" value="ECO:0007669"/>
    <property type="project" value="UniProtKB-KW"/>
</dbReference>
<dbReference type="GO" id="GO:0006281">
    <property type="term" value="P:DNA repair"/>
    <property type="evidence" value="ECO:0007669"/>
    <property type="project" value="UniProtKB-KW"/>
</dbReference>
<dbReference type="GO" id="GO:0006260">
    <property type="term" value="P:DNA replication"/>
    <property type="evidence" value="ECO:0007669"/>
    <property type="project" value="UniProtKB-KW"/>
</dbReference>
<dbReference type="CDD" id="cd17748">
    <property type="entry name" value="BRCT_DNA_ligase_like"/>
    <property type="match status" value="1"/>
</dbReference>
<dbReference type="CDD" id="cd00114">
    <property type="entry name" value="LIGANc"/>
    <property type="match status" value="1"/>
</dbReference>
<dbReference type="FunFam" id="2.40.50.140:FF:000012">
    <property type="entry name" value="DNA ligase"/>
    <property type="match status" value="1"/>
</dbReference>
<dbReference type="FunFam" id="3.40.50.10190:FF:000054">
    <property type="entry name" value="DNA ligase"/>
    <property type="match status" value="1"/>
</dbReference>
<dbReference type="Gene3D" id="6.20.10.30">
    <property type="match status" value="1"/>
</dbReference>
<dbReference type="Gene3D" id="1.10.150.20">
    <property type="entry name" value="5' to 3' exonuclease, C-terminal subdomain"/>
    <property type="match status" value="2"/>
</dbReference>
<dbReference type="Gene3D" id="3.40.50.10190">
    <property type="entry name" value="BRCT domain"/>
    <property type="match status" value="1"/>
</dbReference>
<dbReference type="Gene3D" id="3.30.470.30">
    <property type="entry name" value="DNA ligase/mRNA capping enzyme"/>
    <property type="match status" value="1"/>
</dbReference>
<dbReference type="Gene3D" id="1.10.287.610">
    <property type="entry name" value="Helix hairpin bin"/>
    <property type="match status" value="1"/>
</dbReference>
<dbReference type="Gene3D" id="2.40.50.140">
    <property type="entry name" value="Nucleic acid-binding proteins"/>
    <property type="match status" value="1"/>
</dbReference>
<dbReference type="HAMAP" id="MF_01588">
    <property type="entry name" value="DNA_ligase_A"/>
    <property type="match status" value="1"/>
</dbReference>
<dbReference type="InterPro" id="IPR001357">
    <property type="entry name" value="BRCT_dom"/>
</dbReference>
<dbReference type="InterPro" id="IPR036420">
    <property type="entry name" value="BRCT_dom_sf"/>
</dbReference>
<dbReference type="InterPro" id="IPR041663">
    <property type="entry name" value="DisA/LigA_HHH"/>
</dbReference>
<dbReference type="InterPro" id="IPR001679">
    <property type="entry name" value="DNA_ligase"/>
</dbReference>
<dbReference type="InterPro" id="IPR018239">
    <property type="entry name" value="DNA_ligase_AS"/>
</dbReference>
<dbReference type="InterPro" id="IPR033136">
    <property type="entry name" value="DNA_ligase_CS"/>
</dbReference>
<dbReference type="InterPro" id="IPR013839">
    <property type="entry name" value="DNAligase_adenylation"/>
</dbReference>
<dbReference type="InterPro" id="IPR013840">
    <property type="entry name" value="DNAligase_N"/>
</dbReference>
<dbReference type="InterPro" id="IPR012340">
    <property type="entry name" value="NA-bd_OB-fold"/>
</dbReference>
<dbReference type="InterPro" id="IPR004150">
    <property type="entry name" value="NAD_DNA_ligase_OB"/>
</dbReference>
<dbReference type="InterPro" id="IPR010994">
    <property type="entry name" value="RuvA_2-like"/>
</dbReference>
<dbReference type="InterPro" id="IPR004149">
    <property type="entry name" value="Znf_DNAligase_C4"/>
</dbReference>
<dbReference type="NCBIfam" id="TIGR00575">
    <property type="entry name" value="dnlj"/>
    <property type="match status" value="1"/>
</dbReference>
<dbReference type="NCBIfam" id="NF005932">
    <property type="entry name" value="PRK07956.1"/>
    <property type="match status" value="1"/>
</dbReference>
<dbReference type="PANTHER" id="PTHR23389">
    <property type="entry name" value="CHROMOSOME TRANSMISSION FIDELITY FACTOR 18"/>
    <property type="match status" value="1"/>
</dbReference>
<dbReference type="PANTHER" id="PTHR23389:SF9">
    <property type="entry name" value="DNA LIGASE"/>
    <property type="match status" value="1"/>
</dbReference>
<dbReference type="Pfam" id="PF00533">
    <property type="entry name" value="BRCT"/>
    <property type="match status" value="1"/>
</dbReference>
<dbReference type="Pfam" id="PF01653">
    <property type="entry name" value="DNA_ligase_aden"/>
    <property type="match status" value="1"/>
</dbReference>
<dbReference type="Pfam" id="PF03120">
    <property type="entry name" value="DNA_ligase_OB"/>
    <property type="match status" value="1"/>
</dbReference>
<dbReference type="Pfam" id="PF03119">
    <property type="entry name" value="DNA_ligase_ZBD"/>
    <property type="match status" value="1"/>
</dbReference>
<dbReference type="Pfam" id="PF12826">
    <property type="entry name" value="HHH_2"/>
    <property type="match status" value="1"/>
</dbReference>
<dbReference type="PIRSF" id="PIRSF001604">
    <property type="entry name" value="LigA"/>
    <property type="match status" value="1"/>
</dbReference>
<dbReference type="SMART" id="SM00292">
    <property type="entry name" value="BRCT"/>
    <property type="match status" value="1"/>
</dbReference>
<dbReference type="SMART" id="SM00532">
    <property type="entry name" value="LIGANc"/>
    <property type="match status" value="1"/>
</dbReference>
<dbReference type="SUPFAM" id="SSF52113">
    <property type="entry name" value="BRCT domain"/>
    <property type="match status" value="1"/>
</dbReference>
<dbReference type="SUPFAM" id="SSF56091">
    <property type="entry name" value="DNA ligase/mRNA capping enzyme, catalytic domain"/>
    <property type="match status" value="1"/>
</dbReference>
<dbReference type="SUPFAM" id="SSF50249">
    <property type="entry name" value="Nucleic acid-binding proteins"/>
    <property type="match status" value="1"/>
</dbReference>
<dbReference type="SUPFAM" id="SSF47781">
    <property type="entry name" value="RuvA domain 2-like"/>
    <property type="match status" value="1"/>
</dbReference>
<dbReference type="PROSITE" id="PS50172">
    <property type="entry name" value="BRCT"/>
    <property type="match status" value="1"/>
</dbReference>
<dbReference type="PROSITE" id="PS01055">
    <property type="entry name" value="DNA_LIGASE_N1"/>
    <property type="match status" value="1"/>
</dbReference>
<dbReference type="PROSITE" id="PS01056">
    <property type="entry name" value="DNA_LIGASE_N2"/>
    <property type="match status" value="1"/>
</dbReference>
<reference key="1">
    <citation type="journal article" date="2007" name="Microbiology">
        <title>Comparative analysis of the Corynebacterium glutamicum group and complete genome sequence of strain R.</title>
        <authorList>
            <person name="Yukawa H."/>
            <person name="Omumasaba C.A."/>
            <person name="Nonaka H."/>
            <person name="Kos P."/>
            <person name="Okai N."/>
            <person name="Suzuki N."/>
            <person name="Suda M."/>
            <person name="Tsuge Y."/>
            <person name="Watanabe J."/>
            <person name="Ikeda Y."/>
            <person name="Vertes A.A."/>
            <person name="Inui M."/>
        </authorList>
    </citation>
    <scope>NUCLEOTIDE SEQUENCE [LARGE SCALE GENOMIC DNA]</scope>
    <source>
        <strain>R</strain>
    </source>
</reference>
<evidence type="ECO:0000255" key="1">
    <source>
        <dbReference type="HAMAP-Rule" id="MF_01588"/>
    </source>
</evidence>
<proteinExistence type="inferred from homology"/>
<sequence>MTEDNAQLRRTWNDLAEKVRYHRDRYYNEQPEIPDADFDALFKQLQQLEEDHPELAVPDSPTMVVGAPVAEQSSFDNVEHLERMLSLDNVFDEQELRDWLGRTPAKQYLTELKIDGLSIDLVYRNGQLERAATRGDGRVGEDITANARVIEDIPHQLQGTDEYPVPAVLEIRGEVFITVEDFPEVNAQRIADGGKPFANPRNAAAGSLRQKNIEDVKKRRLRMISHGIGFTEGFSPASQHDAYLALAAWGLPTSPYTEAVTDPEDVVKKVSYWADHRHDALHEMDGLVIKVDDIASQRALGSTSRAPRWAIAYKYPPEEVTTKLLDIQVGVGRTGRVTPFAVMEPVLVAGSTVSMATLHNQSEVKRKGVLIGDTVVIRKAGEVIPEVLGPVVELRDGTEREYIFPTLCPECGTRLAPAKADDVDWRCPNMQSCPGQLSTRLTYLAGRGAFDIEALGEKGAEDLIRTGILLDESGLFDLTEDDLLSSNVYTTNAGKVNASGKKLLDNLQKSKQTDLWRVLVALSIRHVGPTAARALAGRYHSIQALIDAPLEELSETDGVGTIIAQSFKDWFEVDWHKAIVDKWAAAGVTMEEEVGEVAEQTLEGLTIVVTGGLEGFTRDSVKEAIISRGGKASGSVSKKTDYVVVGENAGSKATKAEELGLRILDEAGFVRLLNTGSADE</sequence>
<organism>
    <name type="scientific">Corynebacterium glutamicum (strain R)</name>
    <dbReference type="NCBI Taxonomy" id="340322"/>
    <lineage>
        <taxon>Bacteria</taxon>
        <taxon>Bacillati</taxon>
        <taxon>Actinomycetota</taxon>
        <taxon>Actinomycetes</taxon>
        <taxon>Mycobacteriales</taxon>
        <taxon>Corynebacteriaceae</taxon>
        <taxon>Corynebacterium</taxon>
    </lineage>
</organism>
<gene>
    <name evidence="1" type="primary">ligA</name>
    <name type="ordered locus">cgR_1321</name>
</gene>